<sequence>MAPEINTKLTVPVHSATGGEKRAYVTFLAGTGDYVKGVVGLAKGLRKAKSKYPLVVAVLPDVPEDHRKQLVDQGCVVKEIEPVYPPENQTEFAMAYYVINYSKLRIWEFVEYNKMIYLDGDIQVFDNIDHLFDLPNGQFYAVMDCFCEKTWSHSPQYKIGYCQQCPDKVTWPEAKLGPKPPLYFNAGMFVYEPNLSTYHNLLETVKIVPPTLFAEQDFLNMYFKDIYKPIPPVYNLVLAMLWRHPENIELDQVKVVHYCAAGAKPWRFTGEEENMDREDIKMLVKKWWDIYNDESLDYKNVVIGDSHKKQQTLQQFIEALSEAGALQYVKAPSAA</sequence>
<accession>Q9FXB2</accession>
<accession>Q945L1</accession>
<protein>
    <recommendedName>
        <fullName>Galactinol synthase 2</fullName>
        <shortName>AtGolS2</shortName>
        <shortName>GolS-2</shortName>
        <ecNumber>2.4.1.123</ecNumber>
    </recommendedName>
</protein>
<keyword id="KW-0119">Carbohydrate metabolism</keyword>
<keyword id="KW-0963">Cytoplasm</keyword>
<keyword id="KW-0299">Galactose metabolism</keyword>
<keyword id="KW-0328">Glycosyltransferase</keyword>
<keyword id="KW-0464">Manganese</keyword>
<keyword id="KW-0479">Metal-binding</keyword>
<keyword id="KW-1185">Reference proteome</keyword>
<keyword id="KW-0808">Transferase</keyword>
<proteinExistence type="evidence at protein level"/>
<gene>
    <name type="primary">GOLS2</name>
    <name type="ordered locus">At1g56600</name>
    <name type="ORF">F25P12.95</name>
</gene>
<organism>
    <name type="scientific">Arabidopsis thaliana</name>
    <name type="common">Mouse-ear cress</name>
    <dbReference type="NCBI Taxonomy" id="3702"/>
    <lineage>
        <taxon>Eukaryota</taxon>
        <taxon>Viridiplantae</taxon>
        <taxon>Streptophyta</taxon>
        <taxon>Embryophyta</taxon>
        <taxon>Tracheophyta</taxon>
        <taxon>Spermatophyta</taxon>
        <taxon>Magnoliopsida</taxon>
        <taxon>eudicotyledons</taxon>
        <taxon>Gunneridae</taxon>
        <taxon>Pentapetalae</taxon>
        <taxon>rosids</taxon>
        <taxon>malvids</taxon>
        <taxon>Brassicales</taxon>
        <taxon>Brassicaceae</taxon>
        <taxon>Camelineae</taxon>
        <taxon>Arabidopsis</taxon>
    </lineage>
</organism>
<feature type="chain" id="PRO_0000418658" description="Galactinol synthase 2">
    <location>
        <begin position="1"/>
        <end position="335"/>
    </location>
</feature>
<feature type="active site" evidence="1">
    <location>
        <position position="103"/>
    </location>
</feature>
<feature type="binding site" evidence="1">
    <location>
        <position position="119"/>
    </location>
    <ligand>
        <name>Mn(2+)</name>
        <dbReference type="ChEBI" id="CHEBI:29035"/>
    </ligand>
</feature>
<feature type="binding site" evidence="1">
    <location>
        <position position="121"/>
    </location>
    <ligand>
        <name>Mn(2+)</name>
        <dbReference type="ChEBI" id="CHEBI:29035"/>
    </ligand>
</feature>
<feature type="binding site" evidence="1">
    <location>
        <position position="257"/>
    </location>
    <ligand>
        <name>Mn(2+)</name>
        <dbReference type="ChEBI" id="CHEBI:29035"/>
    </ligand>
</feature>
<dbReference type="EC" id="2.4.1.123"/>
<dbReference type="EMBL" id="AB062849">
    <property type="protein sequence ID" value="BAB78531.1"/>
    <property type="molecule type" value="mRNA"/>
</dbReference>
<dbReference type="EMBL" id="AC009323">
    <property type="protein sequence ID" value="AAG09103.1"/>
    <property type="molecule type" value="Genomic_DNA"/>
</dbReference>
<dbReference type="EMBL" id="CP002684">
    <property type="protein sequence ID" value="AEE33413.1"/>
    <property type="molecule type" value="Genomic_DNA"/>
</dbReference>
<dbReference type="EMBL" id="AF412094">
    <property type="protein sequence ID" value="AAL06547.1"/>
    <property type="molecule type" value="mRNA"/>
</dbReference>
<dbReference type="EMBL" id="AY050410">
    <property type="protein sequence ID" value="AAK91426.1"/>
    <property type="molecule type" value="mRNA"/>
</dbReference>
<dbReference type="EMBL" id="AY058238">
    <property type="protein sequence ID" value="AAL15412.1"/>
    <property type="molecule type" value="mRNA"/>
</dbReference>
<dbReference type="PIR" id="G96607">
    <property type="entry name" value="G96607"/>
</dbReference>
<dbReference type="RefSeq" id="NP_176053.1">
    <property type="nucleotide sequence ID" value="NM_104537.3"/>
</dbReference>
<dbReference type="SMR" id="Q9FXB2"/>
<dbReference type="FunCoup" id="Q9FXB2">
    <property type="interactions" value="264"/>
</dbReference>
<dbReference type="STRING" id="3702.Q9FXB2"/>
<dbReference type="CAZy" id="GT8">
    <property type="family name" value="Glycosyltransferase Family 8"/>
</dbReference>
<dbReference type="PaxDb" id="3702-AT1G56600.1"/>
<dbReference type="ProteomicsDB" id="247018"/>
<dbReference type="EnsemblPlants" id="AT1G56600.1">
    <property type="protein sequence ID" value="AT1G56600.1"/>
    <property type="gene ID" value="AT1G56600"/>
</dbReference>
<dbReference type="GeneID" id="842114"/>
<dbReference type="Gramene" id="AT1G56600.1">
    <property type="protein sequence ID" value="AT1G56600.1"/>
    <property type="gene ID" value="AT1G56600"/>
</dbReference>
<dbReference type="KEGG" id="ath:AT1G56600"/>
<dbReference type="Araport" id="AT1G56600"/>
<dbReference type="TAIR" id="AT1G56600">
    <property type="gene designation" value="GOLS2"/>
</dbReference>
<dbReference type="eggNOG" id="KOG1950">
    <property type="taxonomic scope" value="Eukaryota"/>
</dbReference>
<dbReference type="HOGENOM" id="CLU_049943_3_0_1"/>
<dbReference type="InParanoid" id="Q9FXB2"/>
<dbReference type="OMA" id="TDFAMAY"/>
<dbReference type="PhylomeDB" id="Q9FXB2"/>
<dbReference type="BioCyc" id="ARA:AT1G56600-MONOMER"/>
<dbReference type="BRENDA" id="2.4.1.123">
    <property type="organism ID" value="399"/>
</dbReference>
<dbReference type="PRO" id="PR:Q9FXB2"/>
<dbReference type="Proteomes" id="UP000006548">
    <property type="component" value="Chromosome 1"/>
</dbReference>
<dbReference type="ExpressionAtlas" id="Q9FXB2">
    <property type="expression patterns" value="baseline and differential"/>
</dbReference>
<dbReference type="GO" id="GO:0005737">
    <property type="term" value="C:cytoplasm"/>
    <property type="evidence" value="ECO:0007669"/>
    <property type="project" value="UniProtKB-SubCell"/>
</dbReference>
<dbReference type="GO" id="GO:0047216">
    <property type="term" value="F:inositol 3-alpha-galactosyltransferase activity"/>
    <property type="evidence" value="ECO:0000314"/>
    <property type="project" value="UniProtKB"/>
</dbReference>
<dbReference type="GO" id="GO:0046872">
    <property type="term" value="F:metal ion binding"/>
    <property type="evidence" value="ECO:0007669"/>
    <property type="project" value="UniProtKB-KW"/>
</dbReference>
<dbReference type="GO" id="GO:0006012">
    <property type="term" value="P:galactose metabolic process"/>
    <property type="evidence" value="ECO:0000314"/>
    <property type="project" value="TAIR"/>
</dbReference>
<dbReference type="GO" id="GO:0009737">
    <property type="term" value="P:response to abscisic acid"/>
    <property type="evidence" value="ECO:0000270"/>
    <property type="project" value="UniProtKB"/>
</dbReference>
<dbReference type="GO" id="GO:0009409">
    <property type="term" value="P:response to cold"/>
    <property type="evidence" value="ECO:0000315"/>
    <property type="project" value="TAIR"/>
</dbReference>
<dbReference type="GO" id="GO:0006979">
    <property type="term" value="P:response to oxidative stress"/>
    <property type="evidence" value="ECO:0000270"/>
    <property type="project" value="TAIR"/>
</dbReference>
<dbReference type="GO" id="GO:0009651">
    <property type="term" value="P:response to salt stress"/>
    <property type="evidence" value="ECO:0000315"/>
    <property type="project" value="TAIR"/>
</dbReference>
<dbReference type="GO" id="GO:0009414">
    <property type="term" value="P:response to water deprivation"/>
    <property type="evidence" value="ECO:0000270"/>
    <property type="project" value="UniProtKB"/>
</dbReference>
<dbReference type="CDD" id="cd02537">
    <property type="entry name" value="GT8_Glycogenin"/>
    <property type="match status" value="1"/>
</dbReference>
<dbReference type="FunFam" id="3.90.550.10:FF:000049">
    <property type="entry name" value="Hexosyltransferase"/>
    <property type="match status" value="1"/>
</dbReference>
<dbReference type="Gene3D" id="3.90.550.10">
    <property type="entry name" value="Spore Coat Polysaccharide Biosynthesis Protein SpsA, Chain A"/>
    <property type="match status" value="1"/>
</dbReference>
<dbReference type="InterPro" id="IPR002495">
    <property type="entry name" value="Glyco_trans_8"/>
</dbReference>
<dbReference type="InterPro" id="IPR050587">
    <property type="entry name" value="GNT1/Glycosyltrans_8"/>
</dbReference>
<dbReference type="InterPro" id="IPR029044">
    <property type="entry name" value="Nucleotide-diphossugar_trans"/>
</dbReference>
<dbReference type="PANTHER" id="PTHR11183">
    <property type="entry name" value="GLYCOGENIN SUBFAMILY MEMBER"/>
    <property type="match status" value="1"/>
</dbReference>
<dbReference type="Pfam" id="PF01501">
    <property type="entry name" value="Glyco_transf_8"/>
    <property type="match status" value="1"/>
</dbReference>
<dbReference type="SUPFAM" id="SSF53448">
    <property type="entry name" value="Nucleotide-diphospho-sugar transferases"/>
    <property type="match status" value="1"/>
</dbReference>
<comment type="function">
    <text evidence="2 3">Galactinol synthase involved in the biosynthesis of raffinose family oligosaccharides (RFOs) that function as osmoprotectants. Promotes stress tolerance of factors such as drought, chilling, salinity and methylviologen (MV), a superoxide radical generating drug, by mediating an increase in levels of the endogenous osmoprotective compounds, galactinol and raffinose.</text>
</comment>
<comment type="catalytic activity">
    <reaction evidence="2">
        <text>myo-inositol + UDP-alpha-D-galactose = alpha-D-galactosyl-(1-&gt;3)-1D-myo-inositol + UDP + H(+)</text>
        <dbReference type="Rhea" id="RHEA:12464"/>
        <dbReference type="ChEBI" id="CHEBI:15378"/>
        <dbReference type="ChEBI" id="CHEBI:17268"/>
        <dbReference type="ChEBI" id="CHEBI:17505"/>
        <dbReference type="ChEBI" id="CHEBI:58223"/>
        <dbReference type="ChEBI" id="CHEBI:66914"/>
        <dbReference type="EC" id="2.4.1.123"/>
    </reaction>
</comment>
<comment type="cofactor">
    <cofactor evidence="1">
        <name>a divalent metal cation</name>
        <dbReference type="ChEBI" id="CHEBI:60240"/>
    </cofactor>
</comment>
<comment type="subcellular location">
    <subcellularLocation>
        <location evidence="4">Cytoplasm</location>
    </subcellularLocation>
</comment>
<comment type="tissue specificity">
    <text evidence="2">Accumulates in mature seeds.</text>
</comment>
<comment type="induction">
    <text evidence="2 3">Induced by abscisic acid (ABA), drought and high-salinity stresses. Promoted by methylviologen (MV), a superoxide radical generating drug, a superoxide radical generating drug.</text>
</comment>
<comment type="similarity">
    <text evidence="4">Belongs to the glycosyltransferase 8 family. Galactosyltransferase subfamily.</text>
</comment>
<evidence type="ECO:0000250" key="1"/>
<evidence type="ECO:0000269" key="2">
    <source>
    </source>
</evidence>
<evidence type="ECO:0000269" key="3">
    <source>
    </source>
</evidence>
<evidence type="ECO:0000305" key="4"/>
<reference key="1">
    <citation type="journal article" date="2002" name="Plant J.">
        <title>Important roles of drought- and cold-inducible genes for galactinol synthase in stress tolerance in Arabidopsis thaliana.</title>
        <authorList>
            <person name="Taji T."/>
            <person name="Ohsumi C."/>
            <person name="Iuchi S."/>
            <person name="Seki M."/>
            <person name="Kasuga M."/>
            <person name="Kobayashi M."/>
            <person name="Yamaguchi-Shinozaki K."/>
            <person name="Shinozaki K."/>
        </authorList>
    </citation>
    <scope>NUCLEOTIDE SEQUENCE [MRNA]</scope>
    <scope>FUNCTION</scope>
    <scope>INDUCTION BY DROUGHT; ABA AND HIGH-SALINITY STRESSES</scope>
    <scope>CATALYTIC ACTIVITY</scope>
    <scope>TISSUE SPECIFICITY</scope>
    <scope>GENE FAMILY</scope>
</reference>
<reference key="2">
    <citation type="journal article" date="2000" name="Nature">
        <title>Sequence and analysis of chromosome 1 of the plant Arabidopsis thaliana.</title>
        <authorList>
            <person name="Theologis A."/>
            <person name="Ecker J.R."/>
            <person name="Palm C.J."/>
            <person name="Federspiel N.A."/>
            <person name="Kaul S."/>
            <person name="White O."/>
            <person name="Alonso J."/>
            <person name="Altafi H."/>
            <person name="Araujo R."/>
            <person name="Bowman C.L."/>
            <person name="Brooks S.Y."/>
            <person name="Buehler E."/>
            <person name="Chan A."/>
            <person name="Chao Q."/>
            <person name="Chen H."/>
            <person name="Cheuk R.F."/>
            <person name="Chin C.W."/>
            <person name="Chung M.K."/>
            <person name="Conn L."/>
            <person name="Conway A.B."/>
            <person name="Conway A.R."/>
            <person name="Creasy T.H."/>
            <person name="Dewar K."/>
            <person name="Dunn P."/>
            <person name="Etgu P."/>
            <person name="Feldblyum T.V."/>
            <person name="Feng J.-D."/>
            <person name="Fong B."/>
            <person name="Fujii C.Y."/>
            <person name="Gill J.E."/>
            <person name="Goldsmith A.D."/>
            <person name="Haas B."/>
            <person name="Hansen N.F."/>
            <person name="Hughes B."/>
            <person name="Huizar L."/>
            <person name="Hunter J.L."/>
            <person name="Jenkins J."/>
            <person name="Johnson-Hopson C."/>
            <person name="Khan S."/>
            <person name="Khaykin E."/>
            <person name="Kim C.J."/>
            <person name="Koo H.L."/>
            <person name="Kremenetskaia I."/>
            <person name="Kurtz D.B."/>
            <person name="Kwan A."/>
            <person name="Lam B."/>
            <person name="Langin-Hooper S."/>
            <person name="Lee A."/>
            <person name="Lee J.M."/>
            <person name="Lenz C.A."/>
            <person name="Li J.H."/>
            <person name="Li Y.-P."/>
            <person name="Lin X."/>
            <person name="Liu S.X."/>
            <person name="Liu Z.A."/>
            <person name="Luros J.S."/>
            <person name="Maiti R."/>
            <person name="Marziali A."/>
            <person name="Militscher J."/>
            <person name="Miranda M."/>
            <person name="Nguyen M."/>
            <person name="Nierman W.C."/>
            <person name="Osborne B.I."/>
            <person name="Pai G."/>
            <person name="Peterson J."/>
            <person name="Pham P.K."/>
            <person name="Rizzo M."/>
            <person name="Rooney T."/>
            <person name="Rowley D."/>
            <person name="Sakano H."/>
            <person name="Salzberg S.L."/>
            <person name="Schwartz J.R."/>
            <person name="Shinn P."/>
            <person name="Southwick A.M."/>
            <person name="Sun H."/>
            <person name="Tallon L.J."/>
            <person name="Tambunga G."/>
            <person name="Toriumi M.J."/>
            <person name="Town C.D."/>
            <person name="Utterback T."/>
            <person name="Van Aken S."/>
            <person name="Vaysberg M."/>
            <person name="Vysotskaia V.S."/>
            <person name="Walker M."/>
            <person name="Wu D."/>
            <person name="Yu G."/>
            <person name="Fraser C.M."/>
            <person name="Venter J.C."/>
            <person name="Davis R.W."/>
        </authorList>
    </citation>
    <scope>NUCLEOTIDE SEQUENCE [LARGE SCALE GENOMIC DNA]</scope>
    <source>
        <strain>cv. Columbia</strain>
    </source>
</reference>
<reference key="3">
    <citation type="journal article" date="2017" name="Plant J.">
        <title>Araport11: a complete reannotation of the Arabidopsis thaliana reference genome.</title>
        <authorList>
            <person name="Cheng C.Y."/>
            <person name="Krishnakumar V."/>
            <person name="Chan A.P."/>
            <person name="Thibaud-Nissen F."/>
            <person name="Schobel S."/>
            <person name="Town C.D."/>
        </authorList>
    </citation>
    <scope>GENOME REANNOTATION</scope>
    <source>
        <strain>cv. Columbia</strain>
    </source>
</reference>
<reference key="4">
    <citation type="journal article" date="2003" name="Science">
        <title>Empirical analysis of transcriptional activity in the Arabidopsis genome.</title>
        <authorList>
            <person name="Yamada K."/>
            <person name="Lim J."/>
            <person name="Dale J.M."/>
            <person name="Chen H."/>
            <person name="Shinn P."/>
            <person name="Palm C.J."/>
            <person name="Southwick A.M."/>
            <person name="Wu H.C."/>
            <person name="Kim C.J."/>
            <person name="Nguyen M."/>
            <person name="Pham P.K."/>
            <person name="Cheuk R.F."/>
            <person name="Karlin-Newmann G."/>
            <person name="Liu S.X."/>
            <person name="Lam B."/>
            <person name="Sakano H."/>
            <person name="Wu T."/>
            <person name="Yu G."/>
            <person name="Miranda M."/>
            <person name="Quach H.L."/>
            <person name="Tripp M."/>
            <person name="Chang C.H."/>
            <person name="Lee J.M."/>
            <person name="Toriumi M.J."/>
            <person name="Chan M.M."/>
            <person name="Tang C.C."/>
            <person name="Onodera C.S."/>
            <person name="Deng J.M."/>
            <person name="Akiyama K."/>
            <person name="Ansari Y."/>
            <person name="Arakawa T."/>
            <person name="Banh J."/>
            <person name="Banno F."/>
            <person name="Bowser L."/>
            <person name="Brooks S.Y."/>
            <person name="Carninci P."/>
            <person name="Chao Q."/>
            <person name="Choy N."/>
            <person name="Enju A."/>
            <person name="Goldsmith A.D."/>
            <person name="Gurjal M."/>
            <person name="Hansen N.F."/>
            <person name="Hayashizaki Y."/>
            <person name="Johnson-Hopson C."/>
            <person name="Hsuan V.W."/>
            <person name="Iida K."/>
            <person name="Karnes M."/>
            <person name="Khan S."/>
            <person name="Koesema E."/>
            <person name="Ishida J."/>
            <person name="Jiang P.X."/>
            <person name="Jones T."/>
            <person name="Kawai J."/>
            <person name="Kamiya A."/>
            <person name="Meyers C."/>
            <person name="Nakajima M."/>
            <person name="Narusaka M."/>
            <person name="Seki M."/>
            <person name="Sakurai T."/>
            <person name="Satou M."/>
            <person name="Tamse R."/>
            <person name="Vaysberg M."/>
            <person name="Wallender E.K."/>
            <person name="Wong C."/>
            <person name="Yamamura Y."/>
            <person name="Yuan S."/>
            <person name="Shinozaki K."/>
            <person name="Davis R.W."/>
            <person name="Theologis A."/>
            <person name="Ecker J.R."/>
        </authorList>
    </citation>
    <scope>NUCLEOTIDE SEQUENCE [LARGE SCALE MRNA]</scope>
    <source>
        <strain>cv. Columbia</strain>
    </source>
</reference>
<reference key="5">
    <citation type="journal article" date="2008" name="Plant Physiol.">
        <title>Galactinol and raffinose constitute a novel function to protect plants from oxidative damage.</title>
        <authorList>
            <person name="Nishizawa A."/>
            <person name="Yabuta Y."/>
            <person name="Shigeoka S."/>
        </authorList>
    </citation>
    <scope>FUNCTION</scope>
    <scope>INDUCTION BY METHYLVIOLOGEN</scope>
    <scope>GENE FAMILY</scope>
    <scope>NOMENCLATURE</scope>
</reference>
<name>GOLS2_ARATH</name>